<sequence>MVKAGELVEQQKAAMEEEANAEAAEDQEEPEDTACSSSSKKKKKVVPGIVYLGHVPPRFRPLHVRNLLSAYGEVGRVFFQAEDHFVKRKKKAAAAAGGKKGAKYSKDYTEGWVEFRDKRVAKRVAASLHNTPMGARKRSPFRYDLWNLKYLHRFTWSHLSEHLAFERQVRRQRLRAEVAQAKRETDFYLRNVEQGQHFLAADGDATRPNSSWTFTQRPTEQEFRARKAARPGGRERARLANVEDQARSNRGLLAKIFGAPLPAESKEKP</sequence>
<dbReference type="EMBL" id="AB021860">
    <property type="protein sequence ID" value="BAA87912.1"/>
    <property type="molecule type" value="mRNA"/>
</dbReference>
<dbReference type="EMBL" id="AK009557">
    <property type="protein sequence ID" value="BAB26356.1"/>
    <property type="molecule type" value="mRNA"/>
</dbReference>
<dbReference type="EMBL" id="AK029222">
    <property type="protein sequence ID" value="BAC26353.1"/>
    <property type="molecule type" value="mRNA"/>
</dbReference>
<dbReference type="EMBL" id="AL714025">
    <property type="status" value="NOT_ANNOTATED_CDS"/>
    <property type="molecule type" value="Genomic_DNA"/>
</dbReference>
<dbReference type="EMBL" id="BC082609">
    <property type="protein sequence ID" value="AAH82609.1"/>
    <property type="molecule type" value="mRNA"/>
</dbReference>
<dbReference type="CCDS" id="CCDS26338.1"/>
<dbReference type="RefSeq" id="NP_038952.1">
    <property type="nucleotide sequence ID" value="NM_013924.3"/>
</dbReference>
<dbReference type="BioGRID" id="206023">
    <property type="interactions" value="47"/>
</dbReference>
<dbReference type="FunCoup" id="Q9QYL7">
    <property type="interactions" value="2410"/>
</dbReference>
<dbReference type="STRING" id="10090.ENSMUSP00000045888"/>
<dbReference type="iPTMnet" id="Q9QYL7"/>
<dbReference type="PhosphoSitePlus" id="Q9QYL7"/>
<dbReference type="jPOST" id="Q9QYL7"/>
<dbReference type="PaxDb" id="10090-ENSMUSP00000045888"/>
<dbReference type="PeptideAtlas" id="Q9QYL7"/>
<dbReference type="ProteomicsDB" id="285968"/>
<dbReference type="Pumba" id="Q9QYL7"/>
<dbReference type="Antibodypedia" id="11097">
    <property type="antibodies" value="191 antibodies from 28 providers"/>
</dbReference>
<dbReference type="DNASU" id="30946"/>
<dbReference type="Ensembl" id="ENSMUST00000041782.4">
    <property type="protein sequence ID" value="ENSMUSP00000045888.3"/>
    <property type="gene ID" value="ENSMUSG00000036376.4"/>
</dbReference>
<dbReference type="GeneID" id="30946"/>
<dbReference type="KEGG" id="mmu:30946"/>
<dbReference type="UCSC" id="uc007pto.1">
    <property type="organism name" value="mouse"/>
</dbReference>
<dbReference type="AGR" id="MGI:1353636"/>
<dbReference type="CTD" id="29777"/>
<dbReference type="MGI" id="MGI:1353636">
    <property type="gene designation" value="Abt1"/>
</dbReference>
<dbReference type="VEuPathDB" id="HostDB:ENSMUSG00000036376"/>
<dbReference type="eggNOG" id="KOG3152">
    <property type="taxonomic scope" value="Eukaryota"/>
</dbReference>
<dbReference type="GeneTree" id="ENSGT00390000002062"/>
<dbReference type="HOGENOM" id="CLU_054086_3_1_1"/>
<dbReference type="InParanoid" id="Q9QYL7"/>
<dbReference type="OMA" id="PNGSWAF"/>
<dbReference type="OrthoDB" id="287393at2759"/>
<dbReference type="PhylomeDB" id="Q9QYL7"/>
<dbReference type="TreeFam" id="TF314506"/>
<dbReference type="BioGRID-ORCS" id="30946">
    <property type="hits" value="28 hits in 78 CRISPR screens"/>
</dbReference>
<dbReference type="ChiTaRS" id="Abt1">
    <property type="organism name" value="mouse"/>
</dbReference>
<dbReference type="PRO" id="PR:Q9QYL7"/>
<dbReference type="Proteomes" id="UP000000589">
    <property type="component" value="Chromosome 13"/>
</dbReference>
<dbReference type="RNAct" id="Q9QYL7">
    <property type="molecule type" value="protein"/>
</dbReference>
<dbReference type="Bgee" id="ENSMUSG00000036376">
    <property type="expression patterns" value="Expressed in cleaving embryo and 274 other cell types or tissues"/>
</dbReference>
<dbReference type="GO" id="GO:0005730">
    <property type="term" value="C:nucleolus"/>
    <property type="evidence" value="ECO:0007669"/>
    <property type="project" value="UniProtKB-SubCell"/>
</dbReference>
<dbReference type="GO" id="GO:0005667">
    <property type="term" value="C:transcription regulator complex"/>
    <property type="evidence" value="ECO:0000314"/>
    <property type="project" value="MGI"/>
</dbReference>
<dbReference type="GO" id="GO:0003677">
    <property type="term" value="F:DNA binding"/>
    <property type="evidence" value="ECO:0007669"/>
    <property type="project" value="UniProtKB-KW"/>
</dbReference>
<dbReference type="GO" id="GO:0003723">
    <property type="term" value="F:RNA binding"/>
    <property type="evidence" value="ECO:0007669"/>
    <property type="project" value="UniProtKB-KW"/>
</dbReference>
<dbReference type="GO" id="GO:0006357">
    <property type="term" value="P:regulation of transcription by RNA polymerase II"/>
    <property type="evidence" value="ECO:0000314"/>
    <property type="project" value="MGI"/>
</dbReference>
<dbReference type="GO" id="GO:0021522">
    <property type="term" value="P:spinal cord motor neuron differentiation"/>
    <property type="evidence" value="ECO:0000316"/>
    <property type="project" value="MGI"/>
</dbReference>
<dbReference type="CDD" id="cd12263">
    <property type="entry name" value="RRM_ABT1_like"/>
    <property type="match status" value="1"/>
</dbReference>
<dbReference type="FunFam" id="3.30.70.330:FF:000447">
    <property type="entry name" value="Activator of basal transcription 1"/>
    <property type="match status" value="1"/>
</dbReference>
<dbReference type="Gene3D" id="3.30.70.330">
    <property type="match status" value="1"/>
</dbReference>
<dbReference type="InterPro" id="IPR039119">
    <property type="entry name" value="ABT1/Esf2"/>
</dbReference>
<dbReference type="InterPro" id="IPR034353">
    <property type="entry name" value="ABT1/ESF2_RRM"/>
</dbReference>
<dbReference type="InterPro" id="IPR012677">
    <property type="entry name" value="Nucleotide-bd_a/b_plait_sf"/>
</dbReference>
<dbReference type="InterPro" id="IPR035979">
    <property type="entry name" value="RBD_domain_sf"/>
</dbReference>
<dbReference type="PANTHER" id="PTHR12311">
    <property type="entry name" value="ACTIVATOR OF BASAL TRANSCRIPTION 1"/>
    <property type="match status" value="1"/>
</dbReference>
<dbReference type="PANTHER" id="PTHR12311:SF7">
    <property type="entry name" value="ACTIVATOR OF BASAL TRANSCRIPTION 1"/>
    <property type="match status" value="1"/>
</dbReference>
<dbReference type="SUPFAM" id="SSF54928">
    <property type="entry name" value="RNA-binding domain, RBD"/>
    <property type="match status" value="1"/>
</dbReference>
<accession>Q9QYL7</accession>
<accession>Q0VGU7</accession>
<accession>Q9D762</accession>
<keyword id="KW-0175">Coiled coil</keyword>
<keyword id="KW-0238">DNA-binding</keyword>
<keyword id="KW-0539">Nucleus</keyword>
<keyword id="KW-1185">Reference proteome</keyword>
<keyword id="KW-0694">RNA-binding</keyword>
<keyword id="KW-0804">Transcription</keyword>
<keyword id="KW-0805">Transcription regulation</keyword>
<feature type="chain" id="PRO_0000233169" description="Activator of basal transcription 1">
    <location>
        <begin position="1"/>
        <end position="269"/>
    </location>
</feature>
<feature type="domain" description="RRM">
    <location>
        <begin position="48"/>
        <end position="145"/>
    </location>
</feature>
<feature type="region of interest" description="Disordered" evidence="3">
    <location>
        <begin position="1"/>
        <end position="40"/>
    </location>
</feature>
<feature type="region of interest" description="Disordered" evidence="3">
    <location>
        <begin position="220"/>
        <end position="244"/>
    </location>
</feature>
<feature type="coiled-coil region" evidence="2">
    <location>
        <begin position="5"/>
        <end position="29"/>
    </location>
</feature>
<feature type="coiled-coil region" evidence="2">
    <location>
        <begin position="164"/>
        <end position="194"/>
    </location>
</feature>
<feature type="compositionally biased region" description="Acidic residues" evidence="3">
    <location>
        <begin position="16"/>
        <end position="32"/>
    </location>
</feature>
<feature type="sequence conflict" description="In Ref. 2; BAB26356." evidence="5" ref="2">
    <original>E</original>
    <variation>R</variation>
    <location>
        <position position="73"/>
    </location>
</feature>
<feature type="sequence conflict" description="In Ref. 2; BAB26356." evidence="5" ref="2">
    <original>G</original>
    <variation>D</variation>
    <location>
        <position position="111"/>
    </location>
</feature>
<name>ABT1_MOUSE</name>
<proteinExistence type="evidence at transcript level"/>
<evidence type="ECO:0000250" key="1"/>
<evidence type="ECO:0000255" key="2"/>
<evidence type="ECO:0000256" key="3">
    <source>
        <dbReference type="SAM" id="MobiDB-lite"/>
    </source>
</evidence>
<evidence type="ECO:0000269" key="4">
    <source>
    </source>
</evidence>
<evidence type="ECO:0000305" key="5"/>
<organism>
    <name type="scientific">Mus musculus</name>
    <name type="common">Mouse</name>
    <dbReference type="NCBI Taxonomy" id="10090"/>
    <lineage>
        <taxon>Eukaryota</taxon>
        <taxon>Metazoa</taxon>
        <taxon>Chordata</taxon>
        <taxon>Craniata</taxon>
        <taxon>Vertebrata</taxon>
        <taxon>Euteleostomi</taxon>
        <taxon>Mammalia</taxon>
        <taxon>Eutheria</taxon>
        <taxon>Euarchontoglires</taxon>
        <taxon>Glires</taxon>
        <taxon>Rodentia</taxon>
        <taxon>Myomorpha</taxon>
        <taxon>Muroidea</taxon>
        <taxon>Muridae</taxon>
        <taxon>Murinae</taxon>
        <taxon>Mus</taxon>
        <taxon>Mus</taxon>
    </lineage>
</organism>
<gene>
    <name type="primary">Abt1</name>
</gene>
<comment type="function">
    <text>Could be a novel TATA-binding protein (TBP) which can function as a basal transcription activator. Can act as a regulator of basal transcription for class II genes.</text>
</comment>
<comment type="subunit">
    <text evidence="1">Interacts with ESF1/ABTAP. Interacts with IGHMBP2.</text>
</comment>
<comment type="subcellular location">
    <subcellularLocation>
        <location evidence="4">Nucleus</location>
    </subcellularLocation>
    <subcellularLocation>
        <location evidence="4">Nucleus</location>
        <location evidence="4">Nucleolus</location>
    </subcellularLocation>
</comment>
<comment type="tissue specificity">
    <text evidence="4">Ubiquitously expressed.</text>
</comment>
<comment type="similarity">
    <text evidence="5">Belongs to the ESF2/ABP1 family.</text>
</comment>
<protein>
    <recommendedName>
        <fullName>Activator of basal transcription 1</fullName>
    </recommendedName>
</protein>
<reference key="1">
    <citation type="journal article" date="2000" name="Mol. Cell. Biol.">
        <title>A novel TATA-binding protein-binding protein, ABT1, activates basal transcription and has a yeast homolog that is essential for growth.</title>
        <authorList>
            <person name="Oda T."/>
            <person name="Kayukawa K."/>
            <person name="Hagiwara H."/>
            <person name="Yudate H.T."/>
            <person name="Masuho Y."/>
            <person name="Murakami Y."/>
            <person name="Tamura T.-A."/>
            <person name="Muramatsu M.-A."/>
        </authorList>
    </citation>
    <scope>NUCLEOTIDE SEQUENCE [MRNA]</scope>
    <scope>SUBCELLULAR LOCATION</scope>
    <scope>TISSUE SPECIFICITY</scope>
    <source>
        <tissue>Fibroblast</tissue>
    </source>
</reference>
<reference key="2">
    <citation type="journal article" date="2005" name="Science">
        <title>The transcriptional landscape of the mammalian genome.</title>
        <authorList>
            <person name="Carninci P."/>
            <person name="Kasukawa T."/>
            <person name="Katayama S."/>
            <person name="Gough J."/>
            <person name="Frith M.C."/>
            <person name="Maeda N."/>
            <person name="Oyama R."/>
            <person name="Ravasi T."/>
            <person name="Lenhard B."/>
            <person name="Wells C."/>
            <person name="Kodzius R."/>
            <person name="Shimokawa K."/>
            <person name="Bajic V.B."/>
            <person name="Brenner S.E."/>
            <person name="Batalov S."/>
            <person name="Forrest A.R."/>
            <person name="Zavolan M."/>
            <person name="Davis M.J."/>
            <person name="Wilming L.G."/>
            <person name="Aidinis V."/>
            <person name="Allen J.E."/>
            <person name="Ambesi-Impiombato A."/>
            <person name="Apweiler R."/>
            <person name="Aturaliya R.N."/>
            <person name="Bailey T.L."/>
            <person name="Bansal M."/>
            <person name="Baxter L."/>
            <person name="Beisel K.W."/>
            <person name="Bersano T."/>
            <person name="Bono H."/>
            <person name="Chalk A.M."/>
            <person name="Chiu K.P."/>
            <person name="Choudhary V."/>
            <person name="Christoffels A."/>
            <person name="Clutterbuck D.R."/>
            <person name="Crowe M.L."/>
            <person name="Dalla E."/>
            <person name="Dalrymple B.P."/>
            <person name="de Bono B."/>
            <person name="Della Gatta G."/>
            <person name="di Bernardo D."/>
            <person name="Down T."/>
            <person name="Engstrom P."/>
            <person name="Fagiolini M."/>
            <person name="Faulkner G."/>
            <person name="Fletcher C.F."/>
            <person name="Fukushima T."/>
            <person name="Furuno M."/>
            <person name="Futaki S."/>
            <person name="Gariboldi M."/>
            <person name="Georgii-Hemming P."/>
            <person name="Gingeras T.R."/>
            <person name="Gojobori T."/>
            <person name="Green R.E."/>
            <person name="Gustincich S."/>
            <person name="Harbers M."/>
            <person name="Hayashi Y."/>
            <person name="Hensch T.K."/>
            <person name="Hirokawa N."/>
            <person name="Hill D."/>
            <person name="Huminiecki L."/>
            <person name="Iacono M."/>
            <person name="Ikeo K."/>
            <person name="Iwama A."/>
            <person name="Ishikawa T."/>
            <person name="Jakt M."/>
            <person name="Kanapin A."/>
            <person name="Katoh M."/>
            <person name="Kawasawa Y."/>
            <person name="Kelso J."/>
            <person name="Kitamura H."/>
            <person name="Kitano H."/>
            <person name="Kollias G."/>
            <person name="Krishnan S.P."/>
            <person name="Kruger A."/>
            <person name="Kummerfeld S.K."/>
            <person name="Kurochkin I.V."/>
            <person name="Lareau L.F."/>
            <person name="Lazarevic D."/>
            <person name="Lipovich L."/>
            <person name="Liu J."/>
            <person name="Liuni S."/>
            <person name="McWilliam S."/>
            <person name="Madan Babu M."/>
            <person name="Madera M."/>
            <person name="Marchionni L."/>
            <person name="Matsuda H."/>
            <person name="Matsuzawa S."/>
            <person name="Miki H."/>
            <person name="Mignone F."/>
            <person name="Miyake S."/>
            <person name="Morris K."/>
            <person name="Mottagui-Tabar S."/>
            <person name="Mulder N."/>
            <person name="Nakano N."/>
            <person name="Nakauchi H."/>
            <person name="Ng P."/>
            <person name="Nilsson R."/>
            <person name="Nishiguchi S."/>
            <person name="Nishikawa S."/>
            <person name="Nori F."/>
            <person name="Ohara O."/>
            <person name="Okazaki Y."/>
            <person name="Orlando V."/>
            <person name="Pang K.C."/>
            <person name="Pavan W.J."/>
            <person name="Pavesi G."/>
            <person name="Pesole G."/>
            <person name="Petrovsky N."/>
            <person name="Piazza S."/>
            <person name="Reed J."/>
            <person name="Reid J.F."/>
            <person name="Ring B.Z."/>
            <person name="Ringwald M."/>
            <person name="Rost B."/>
            <person name="Ruan Y."/>
            <person name="Salzberg S.L."/>
            <person name="Sandelin A."/>
            <person name="Schneider C."/>
            <person name="Schoenbach C."/>
            <person name="Sekiguchi K."/>
            <person name="Semple C.A."/>
            <person name="Seno S."/>
            <person name="Sessa L."/>
            <person name="Sheng Y."/>
            <person name="Shibata Y."/>
            <person name="Shimada H."/>
            <person name="Shimada K."/>
            <person name="Silva D."/>
            <person name="Sinclair B."/>
            <person name="Sperling S."/>
            <person name="Stupka E."/>
            <person name="Sugiura K."/>
            <person name="Sultana R."/>
            <person name="Takenaka Y."/>
            <person name="Taki K."/>
            <person name="Tammoja K."/>
            <person name="Tan S.L."/>
            <person name="Tang S."/>
            <person name="Taylor M.S."/>
            <person name="Tegner J."/>
            <person name="Teichmann S.A."/>
            <person name="Ueda H.R."/>
            <person name="van Nimwegen E."/>
            <person name="Verardo R."/>
            <person name="Wei C.L."/>
            <person name="Yagi K."/>
            <person name="Yamanishi H."/>
            <person name="Zabarovsky E."/>
            <person name="Zhu S."/>
            <person name="Zimmer A."/>
            <person name="Hide W."/>
            <person name="Bult C."/>
            <person name="Grimmond S.M."/>
            <person name="Teasdale R.D."/>
            <person name="Liu E.T."/>
            <person name="Brusic V."/>
            <person name="Quackenbush J."/>
            <person name="Wahlestedt C."/>
            <person name="Mattick J.S."/>
            <person name="Hume D.A."/>
            <person name="Kai C."/>
            <person name="Sasaki D."/>
            <person name="Tomaru Y."/>
            <person name="Fukuda S."/>
            <person name="Kanamori-Katayama M."/>
            <person name="Suzuki M."/>
            <person name="Aoki J."/>
            <person name="Arakawa T."/>
            <person name="Iida J."/>
            <person name="Imamura K."/>
            <person name="Itoh M."/>
            <person name="Kato T."/>
            <person name="Kawaji H."/>
            <person name="Kawagashira N."/>
            <person name="Kawashima T."/>
            <person name="Kojima M."/>
            <person name="Kondo S."/>
            <person name="Konno H."/>
            <person name="Nakano K."/>
            <person name="Ninomiya N."/>
            <person name="Nishio T."/>
            <person name="Okada M."/>
            <person name="Plessy C."/>
            <person name="Shibata K."/>
            <person name="Shiraki T."/>
            <person name="Suzuki S."/>
            <person name="Tagami M."/>
            <person name="Waki K."/>
            <person name="Watahiki A."/>
            <person name="Okamura-Oho Y."/>
            <person name="Suzuki H."/>
            <person name="Kawai J."/>
            <person name="Hayashizaki Y."/>
        </authorList>
    </citation>
    <scope>NUCLEOTIDE SEQUENCE [LARGE SCALE MRNA]</scope>
    <source>
        <strain>C57BL/6J</strain>
        <tissue>Head</tissue>
        <tissue>Tongue</tissue>
    </source>
</reference>
<reference key="3">
    <citation type="journal article" date="2009" name="PLoS Biol.">
        <title>Lineage-specific biology revealed by a finished genome assembly of the mouse.</title>
        <authorList>
            <person name="Church D.M."/>
            <person name="Goodstadt L."/>
            <person name="Hillier L.W."/>
            <person name="Zody M.C."/>
            <person name="Goldstein S."/>
            <person name="She X."/>
            <person name="Bult C.J."/>
            <person name="Agarwala R."/>
            <person name="Cherry J.L."/>
            <person name="DiCuccio M."/>
            <person name="Hlavina W."/>
            <person name="Kapustin Y."/>
            <person name="Meric P."/>
            <person name="Maglott D."/>
            <person name="Birtle Z."/>
            <person name="Marques A.C."/>
            <person name="Graves T."/>
            <person name="Zhou S."/>
            <person name="Teague B."/>
            <person name="Potamousis K."/>
            <person name="Churas C."/>
            <person name="Place M."/>
            <person name="Herschleb J."/>
            <person name="Runnheim R."/>
            <person name="Forrest D."/>
            <person name="Amos-Landgraf J."/>
            <person name="Schwartz D.C."/>
            <person name="Cheng Z."/>
            <person name="Lindblad-Toh K."/>
            <person name="Eichler E.E."/>
            <person name="Ponting C.P."/>
        </authorList>
    </citation>
    <scope>NUCLEOTIDE SEQUENCE [LARGE SCALE GENOMIC DNA]</scope>
    <source>
        <strain>C57BL/6J</strain>
    </source>
</reference>
<reference key="4">
    <citation type="journal article" date="2004" name="Genome Res.">
        <title>The status, quality, and expansion of the NIH full-length cDNA project: the Mammalian Gene Collection (MGC).</title>
        <authorList>
            <consortium name="The MGC Project Team"/>
        </authorList>
    </citation>
    <scope>NUCLEOTIDE SEQUENCE [LARGE SCALE MRNA]</scope>
    <source>
        <strain>C57BL/6J</strain>
        <tissue>Eye</tissue>
    </source>
</reference>